<protein>
    <recommendedName>
        <fullName evidence="1">Glucose-6-phosphate isomerase</fullName>
        <shortName evidence="1">GPI</shortName>
        <ecNumber evidence="1">5.3.1.9</ecNumber>
    </recommendedName>
    <alternativeName>
        <fullName evidence="1">Phosphoglucose isomerase</fullName>
        <shortName evidence="1">PGI</shortName>
    </alternativeName>
    <alternativeName>
        <fullName evidence="1">Phosphohexose isomerase</fullName>
        <shortName evidence="1">PHI</shortName>
    </alternativeName>
</protein>
<reference key="1">
    <citation type="journal article" date="2003" name="Nucleic Acids Res.">
        <title>The complete genome sequence and analysis of Corynebacterium diphtheriae NCTC13129.</title>
        <authorList>
            <person name="Cerdeno-Tarraga A.-M."/>
            <person name="Efstratiou A."/>
            <person name="Dover L.G."/>
            <person name="Holden M.T.G."/>
            <person name="Pallen M.J."/>
            <person name="Bentley S.D."/>
            <person name="Besra G.S."/>
            <person name="Churcher C.M."/>
            <person name="James K.D."/>
            <person name="De Zoysa A."/>
            <person name="Chillingworth T."/>
            <person name="Cronin A."/>
            <person name="Dowd L."/>
            <person name="Feltwell T."/>
            <person name="Hamlin N."/>
            <person name="Holroyd S."/>
            <person name="Jagels K."/>
            <person name="Moule S."/>
            <person name="Quail M.A."/>
            <person name="Rabbinowitsch E."/>
            <person name="Rutherford K.M."/>
            <person name="Thomson N.R."/>
            <person name="Unwin L."/>
            <person name="Whitehead S."/>
            <person name="Barrell B.G."/>
            <person name="Parkhill J."/>
        </authorList>
    </citation>
    <scope>NUCLEOTIDE SEQUENCE [LARGE SCALE GENOMIC DNA]</scope>
    <source>
        <strain>ATCC 700971 / NCTC 13129 / Biotype gravis</strain>
    </source>
</reference>
<keyword id="KW-0963">Cytoplasm</keyword>
<keyword id="KW-0312">Gluconeogenesis</keyword>
<keyword id="KW-0324">Glycolysis</keyword>
<keyword id="KW-0413">Isomerase</keyword>
<keyword id="KW-1185">Reference proteome</keyword>
<proteinExistence type="inferred from homology"/>
<sequence length="547" mass="59411">MSFDVTTTEPWATLSERYTAMKATTLRDLFASNPNRAQELSFEAAGLHVDLSKNLIDAETVAAFTALAKASGMREKIKAMFDGEHINNTEDRAVLHTALRLAVDAELNVDGQDVAADVHEVLGRMRDFATSLRNGSWRGYSNHTIKTIVNIGIGGSDLGPAMATKALRTYATAGINAKFVSNVDPADMHAVLDELDPESTLFVVASKTFTTQETLANAHAAKRWLVAAAGGDESAVAKHFVAVSTNAEKVAEFGIDTKNMFGFWNWVGGRYSVDSAIGLSLMSVIGPMDFMRFLDGFRAMDEHFRTADFESNIPVLMGMLNVFYNDFFGAETHAVLPYSQDLGRFPAYLQQLTMESNGKSVRHDGSAVTTNTGEIYWGEPGTNGQHAFFQLIHQGTKLIPADFIGFARPKEDLPTASGEGSMHDLLMSNFFAQTKVLAFGKTAEEIAAEGVSPELVAHKVMPGNRPTTTIMAEELTPFALGALIALYEHIVFVEGVIWDINSFDQWGVELGKQQANDLAPAVAGEVAVDSGDSSTDALISWYRSHRG</sequence>
<feature type="chain" id="PRO_0000180631" description="Glucose-6-phosphate isomerase">
    <location>
        <begin position="1"/>
        <end position="547"/>
    </location>
</feature>
<feature type="active site" description="Proton donor" evidence="1">
    <location>
        <position position="355"/>
    </location>
</feature>
<feature type="active site" evidence="1">
    <location>
        <position position="386"/>
    </location>
</feature>
<feature type="active site" evidence="1">
    <location>
        <position position="512"/>
    </location>
</feature>
<organism>
    <name type="scientific">Corynebacterium diphtheriae (strain ATCC 700971 / NCTC 13129 / Biotype gravis)</name>
    <dbReference type="NCBI Taxonomy" id="257309"/>
    <lineage>
        <taxon>Bacteria</taxon>
        <taxon>Bacillati</taxon>
        <taxon>Actinomycetota</taxon>
        <taxon>Actinomycetes</taxon>
        <taxon>Mycobacteriales</taxon>
        <taxon>Corynebacteriaceae</taxon>
        <taxon>Corynebacterium</taxon>
    </lineage>
</organism>
<dbReference type="EC" id="5.3.1.9" evidence="1"/>
<dbReference type="EMBL" id="BX248356">
    <property type="protein sequence ID" value="CAE49348.1"/>
    <property type="molecule type" value="Genomic_DNA"/>
</dbReference>
<dbReference type="RefSeq" id="WP_010934598.1">
    <property type="nucleotide sequence ID" value="NC_002935.2"/>
</dbReference>
<dbReference type="SMR" id="Q6NIE5"/>
<dbReference type="STRING" id="257309.DIP0832"/>
<dbReference type="KEGG" id="cdi:DIP0832"/>
<dbReference type="HOGENOM" id="CLU_017947_3_1_11"/>
<dbReference type="UniPathway" id="UPA00109">
    <property type="reaction ID" value="UER00181"/>
</dbReference>
<dbReference type="UniPathway" id="UPA00138"/>
<dbReference type="Proteomes" id="UP000002198">
    <property type="component" value="Chromosome"/>
</dbReference>
<dbReference type="GO" id="GO:0005829">
    <property type="term" value="C:cytosol"/>
    <property type="evidence" value="ECO:0007669"/>
    <property type="project" value="TreeGrafter"/>
</dbReference>
<dbReference type="GO" id="GO:0097367">
    <property type="term" value="F:carbohydrate derivative binding"/>
    <property type="evidence" value="ECO:0007669"/>
    <property type="project" value="InterPro"/>
</dbReference>
<dbReference type="GO" id="GO:0004347">
    <property type="term" value="F:glucose-6-phosphate isomerase activity"/>
    <property type="evidence" value="ECO:0007669"/>
    <property type="project" value="UniProtKB-UniRule"/>
</dbReference>
<dbReference type="GO" id="GO:0048029">
    <property type="term" value="F:monosaccharide binding"/>
    <property type="evidence" value="ECO:0007669"/>
    <property type="project" value="TreeGrafter"/>
</dbReference>
<dbReference type="GO" id="GO:0006094">
    <property type="term" value="P:gluconeogenesis"/>
    <property type="evidence" value="ECO:0007669"/>
    <property type="project" value="UniProtKB-UniRule"/>
</dbReference>
<dbReference type="GO" id="GO:0051156">
    <property type="term" value="P:glucose 6-phosphate metabolic process"/>
    <property type="evidence" value="ECO:0007669"/>
    <property type="project" value="TreeGrafter"/>
</dbReference>
<dbReference type="GO" id="GO:0006096">
    <property type="term" value="P:glycolytic process"/>
    <property type="evidence" value="ECO:0007669"/>
    <property type="project" value="UniProtKB-UniRule"/>
</dbReference>
<dbReference type="CDD" id="cd05015">
    <property type="entry name" value="SIS_PGI_1"/>
    <property type="match status" value="1"/>
</dbReference>
<dbReference type="CDD" id="cd05016">
    <property type="entry name" value="SIS_PGI_2"/>
    <property type="match status" value="1"/>
</dbReference>
<dbReference type="FunFam" id="3.40.50.10490:FF:000018">
    <property type="entry name" value="Glucose-6-phosphate isomerase"/>
    <property type="match status" value="1"/>
</dbReference>
<dbReference type="Gene3D" id="1.10.1390.10">
    <property type="match status" value="1"/>
</dbReference>
<dbReference type="Gene3D" id="3.40.50.10490">
    <property type="entry name" value="Glucose-6-phosphate isomerase like protein, domain 1"/>
    <property type="match status" value="2"/>
</dbReference>
<dbReference type="HAMAP" id="MF_00473">
    <property type="entry name" value="G6P_isomerase"/>
    <property type="match status" value="1"/>
</dbReference>
<dbReference type="InterPro" id="IPR001672">
    <property type="entry name" value="G6P_Isomerase"/>
</dbReference>
<dbReference type="InterPro" id="IPR023096">
    <property type="entry name" value="G6P_Isomerase_C"/>
</dbReference>
<dbReference type="InterPro" id="IPR018189">
    <property type="entry name" value="Phosphoglucose_isomerase_CS"/>
</dbReference>
<dbReference type="InterPro" id="IPR046348">
    <property type="entry name" value="SIS_dom_sf"/>
</dbReference>
<dbReference type="InterPro" id="IPR035476">
    <property type="entry name" value="SIS_PGI_1"/>
</dbReference>
<dbReference type="InterPro" id="IPR035482">
    <property type="entry name" value="SIS_PGI_2"/>
</dbReference>
<dbReference type="NCBIfam" id="NF001211">
    <property type="entry name" value="PRK00179.1"/>
    <property type="match status" value="1"/>
</dbReference>
<dbReference type="PANTHER" id="PTHR11469">
    <property type="entry name" value="GLUCOSE-6-PHOSPHATE ISOMERASE"/>
    <property type="match status" value="1"/>
</dbReference>
<dbReference type="PANTHER" id="PTHR11469:SF1">
    <property type="entry name" value="GLUCOSE-6-PHOSPHATE ISOMERASE"/>
    <property type="match status" value="1"/>
</dbReference>
<dbReference type="Pfam" id="PF00342">
    <property type="entry name" value="PGI"/>
    <property type="match status" value="1"/>
</dbReference>
<dbReference type="PRINTS" id="PR00662">
    <property type="entry name" value="G6PISOMERASE"/>
</dbReference>
<dbReference type="SUPFAM" id="SSF53697">
    <property type="entry name" value="SIS domain"/>
    <property type="match status" value="1"/>
</dbReference>
<dbReference type="PROSITE" id="PS00765">
    <property type="entry name" value="P_GLUCOSE_ISOMERASE_1"/>
    <property type="match status" value="1"/>
</dbReference>
<dbReference type="PROSITE" id="PS00174">
    <property type="entry name" value="P_GLUCOSE_ISOMERASE_2"/>
    <property type="match status" value="1"/>
</dbReference>
<dbReference type="PROSITE" id="PS51463">
    <property type="entry name" value="P_GLUCOSE_ISOMERASE_3"/>
    <property type="match status" value="1"/>
</dbReference>
<gene>
    <name evidence="1" type="primary">pgi</name>
    <name type="ordered locus">DIP0832</name>
</gene>
<name>G6PI_CORDI</name>
<comment type="function">
    <text evidence="1">Catalyzes the reversible isomerization of glucose-6-phosphate to fructose-6-phosphate.</text>
</comment>
<comment type="catalytic activity">
    <reaction evidence="1">
        <text>alpha-D-glucose 6-phosphate = beta-D-fructose 6-phosphate</text>
        <dbReference type="Rhea" id="RHEA:11816"/>
        <dbReference type="ChEBI" id="CHEBI:57634"/>
        <dbReference type="ChEBI" id="CHEBI:58225"/>
        <dbReference type="EC" id="5.3.1.9"/>
    </reaction>
</comment>
<comment type="pathway">
    <text evidence="1">Carbohydrate biosynthesis; gluconeogenesis.</text>
</comment>
<comment type="pathway">
    <text evidence="1">Carbohydrate degradation; glycolysis; D-glyceraldehyde 3-phosphate and glycerone phosphate from D-glucose: step 2/4.</text>
</comment>
<comment type="subcellular location">
    <subcellularLocation>
        <location evidence="1">Cytoplasm</location>
    </subcellularLocation>
</comment>
<comment type="similarity">
    <text evidence="1">Belongs to the GPI family.</text>
</comment>
<accession>Q6NIE5</accession>
<evidence type="ECO:0000255" key="1">
    <source>
        <dbReference type="HAMAP-Rule" id="MF_00473"/>
    </source>
</evidence>